<evidence type="ECO:0000255" key="1">
    <source>
        <dbReference type="HAMAP-Rule" id="MF_00148"/>
    </source>
</evidence>
<proteinExistence type="inferred from homology"/>
<feature type="chain" id="PRO_1000009873" description="Uracil-DNA glycosylase">
    <location>
        <begin position="1"/>
        <end position="232"/>
    </location>
</feature>
<feature type="active site" description="Proton acceptor" evidence="1">
    <location>
        <position position="70"/>
    </location>
</feature>
<keyword id="KW-0963">Cytoplasm</keyword>
<keyword id="KW-0227">DNA damage</keyword>
<keyword id="KW-0234">DNA repair</keyword>
<keyword id="KW-0378">Hydrolase</keyword>
<sequence length="232" mass="25940">MTIDLAKVKIEDSWKEVLKDEFLSSYFLEIKFNLINALKNGKVYPPSNLIFNAFNLTPFDKVKVVILGQDPYHNEGEAMGLSFSVPKGVRVPPSLANIYKEIKDDLGIIEPNCGDLSYWAKQGVLLLNATLSVGARMANSHSNFGWQIFSDAVIKNISEKKTGVVFMLWGNYARAKANLIEANKHLVLTAAHPSPLARGAFFGSRHFSKCNNYLIKNGQTPIDWDLNNYTLN</sequence>
<comment type="function">
    <text evidence="1">Excises uracil residues from the DNA which can arise as a result of misincorporation of dUMP residues by DNA polymerase or due to deamination of cytosine.</text>
</comment>
<comment type="catalytic activity">
    <reaction evidence="1">
        <text>Hydrolyzes single-stranded DNA or mismatched double-stranded DNA and polynucleotides, releasing free uracil.</text>
        <dbReference type="EC" id="3.2.2.27"/>
    </reaction>
</comment>
<comment type="subcellular location">
    <subcellularLocation>
        <location evidence="1">Cytoplasm</location>
    </subcellularLocation>
</comment>
<comment type="similarity">
    <text evidence="1">Belongs to the uracil-DNA glycosylase (UDG) superfamily. UNG family.</text>
</comment>
<accession>A0RM89</accession>
<reference key="1">
    <citation type="submission" date="2006-11" db="EMBL/GenBank/DDBJ databases">
        <title>Sequence of Campylobacter fetus subsp. fetus 82-40.</title>
        <authorList>
            <person name="Fouts D.E."/>
            <person name="Nelson K.E."/>
        </authorList>
    </citation>
    <scope>NUCLEOTIDE SEQUENCE [LARGE SCALE GENOMIC DNA]</scope>
    <source>
        <strain>82-40</strain>
    </source>
</reference>
<gene>
    <name evidence="1" type="primary">ung</name>
    <name type="ordered locus">CFF8240_0112</name>
</gene>
<protein>
    <recommendedName>
        <fullName evidence="1">Uracil-DNA glycosylase</fullName>
        <shortName evidence="1">UDG</shortName>
        <ecNumber evidence="1">3.2.2.27</ecNumber>
    </recommendedName>
</protein>
<organism>
    <name type="scientific">Campylobacter fetus subsp. fetus (strain 82-40)</name>
    <dbReference type="NCBI Taxonomy" id="360106"/>
    <lineage>
        <taxon>Bacteria</taxon>
        <taxon>Pseudomonadati</taxon>
        <taxon>Campylobacterota</taxon>
        <taxon>Epsilonproteobacteria</taxon>
        <taxon>Campylobacterales</taxon>
        <taxon>Campylobacteraceae</taxon>
        <taxon>Campylobacter</taxon>
    </lineage>
</organism>
<dbReference type="EC" id="3.2.2.27" evidence="1"/>
<dbReference type="EMBL" id="CP000487">
    <property type="protein sequence ID" value="ABK82941.1"/>
    <property type="molecule type" value="Genomic_DNA"/>
</dbReference>
<dbReference type="RefSeq" id="WP_002848107.1">
    <property type="nucleotide sequence ID" value="NC_008599.1"/>
</dbReference>
<dbReference type="SMR" id="A0RM89"/>
<dbReference type="GeneID" id="61063958"/>
<dbReference type="KEGG" id="cff:CFF8240_0112"/>
<dbReference type="eggNOG" id="COG0692">
    <property type="taxonomic scope" value="Bacteria"/>
</dbReference>
<dbReference type="HOGENOM" id="CLU_032162_3_0_7"/>
<dbReference type="Proteomes" id="UP000000760">
    <property type="component" value="Chromosome"/>
</dbReference>
<dbReference type="GO" id="GO:0005737">
    <property type="term" value="C:cytoplasm"/>
    <property type="evidence" value="ECO:0007669"/>
    <property type="project" value="UniProtKB-SubCell"/>
</dbReference>
<dbReference type="GO" id="GO:0004844">
    <property type="term" value="F:uracil DNA N-glycosylase activity"/>
    <property type="evidence" value="ECO:0007669"/>
    <property type="project" value="UniProtKB-UniRule"/>
</dbReference>
<dbReference type="GO" id="GO:0097510">
    <property type="term" value="P:base-excision repair, AP site formation via deaminated base removal"/>
    <property type="evidence" value="ECO:0007669"/>
    <property type="project" value="TreeGrafter"/>
</dbReference>
<dbReference type="CDD" id="cd10027">
    <property type="entry name" value="UDG-F1-like"/>
    <property type="match status" value="1"/>
</dbReference>
<dbReference type="FunFam" id="3.40.470.10:FF:000001">
    <property type="entry name" value="Uracil-DNA glycosylase"/>
    <property type="match status" value="1"/>
</dbReference>
<dbReference type="Gene3D" id="3.40.470.10">
    <property type="entry name" value="Uracil-DNA glycosylase-like domain"/>
    <property type="match status" value="1"/>
</dbReference>
<dbReference type="HAMAP" id="MF_00148">
    <property type="entry name" value="UDG"/>
    <property type="match status" value="1"/>
</dbReference>
<dbReference type="InterPro" id="IPR002043">
    <property type="entry name" value="UDG_fam1"/>
</dbReference>
<dbReference type="InterPro" id="IPR018085">
    <property type="entry name" value="Ura-DNA_Glyclase_AS"/>
</dbReference>
<dbReference type="InterPro" id="IPR005122">
    <property type="entry name" value="Uracil-DNA_glycosylase-like"/>
</dbReference>
<dbReference type="InterPro" id="IPR036895">
    <property type="entry name" value="Uracil-DNA_glycosylase-like_sf"/>
</dbReference>
<dbReference type="NCBIfam" id="NF003588">
    <property type="entry name" value="PRK05254.1-1"/>
    <property type="match status" value="1"/>
</dbReference>
<dbReference type="NCBIfam" id="NF003589">
    <property type="entry name" value="PRK05254.1-2"/>
    <property type="match status" value="1"/>
</dbReference>
<dbReference type="NCBIfam" id="NF003591">
    <property type="entry name" value="PRK05254.1-4"/>
    <property type="match status" value="1"/>
</dbReference>
<dbReference type="NCBIfam" id="NF003592">
    <property type="entry name" value="PRK05254.1-5"/>
    <property type="match status" value="1"/>
</dbReference>
<dbReference type="NCBIfam" id="TIGR00628">
    <property type="entry name" value="ung"/>
    <property type="match status" value="1"/>
</dbReference>
<dbReference type="PANTHER" id="PTHR11264">
    <property type="entry name" value="URACIL-DNA GLYCOSYLASE"/>
    <property type="match status" value="1"/>
</dbReference>
<dbReference type="PANTHER" id="PTHR11264:SF0">
    <property type="entry name" value="URACIL-DNA GLYCOSYLASE"/>
    <property type="match status" value="1"/>
</dbReference>
<dbReference type="Pfam" id="PF03167">
    <property type="entry name" value="UDG"/>
    <property type="match status" value="1"/>
</dbReference>
<dbReference type="SMART" id="SM00986">
    <property type="entry name" value="UDG"/>
    <property type="match status" value="1"/>
</dbReference>
<dbReference type="SMART" id="SM00987">
    <property type="entry name" value="UreE_C"/>
    <property type="match status" value="1"/>
</dbReference>
<dbReference type="SUPFAM" id="SSF52141">
    <property type="entry name" value="Uracil-DNA glycosylase-like"/>
    <property type="match status" value="1"/>
</dbReference>
<dbReference type="PROSITE" id="PS00130">
    <property type="entry name" value="U_DNA_GLYCOSYLASE"/>
    <property type="match status" value="1"/>
</dbReference>
<name>UNG_CAMFF</name>